<keyword id="KW-0175">Coiled coil</keyword>
<keyword id="KW-0403">Intermediate filament</keyword>
<keyword id="KW-0416">Keratin</keyword>
<keyword id="KW-1185">Reference proteome</keyword>
<sequence length="512" mass="54041">MFCSAQKGSCSSRVSSSGAVGSRGCTGGSSFGGGSSCGLGGGSAWGFQGSSNSWSLSGGSKGSMGGGFGSCSVRGGFGAASSYGGGSGFGGSSGFGGGSGFGGGSGFGGGSSGGFSSYGGSMGCGLGGVSGYDGGLLSGSEKQTMQDLNDRLANYLDKVRALEEANTDLECKIKDWYGKHGSVKGGSGRDYSQYYSIIEDLKKQILSATCENARMTLQIDNARLAADDFRMKYEHELCLRECLEADINGLRKVLDEMTMTRCDLEMQIEGLTEELVFLRKNHEEEMKCMQGSSGGDVTVEMNAAPGVDLTKLLNDMRAQYEAMAEQNRQEAERQFNERSASLQAQISSDAGEANCARSEVMELKRTVQTLEIELQSQLALKCSLEGTLADTEAGYVAQLSGIQAQISSLEEQLSQIRAETQCQSAEYECLLNIKTRLEQEIETYRRLLNGDGGGCDYRNLVSKNVVLSDSGSCAGQGKDPSKTRVTKTIIEEVVDGRVVSSQVSNISEVKIK</sequence>
<proteinExistence type="evidence at transcript level"/>
<name>K1C24_MOUSE</name>
<feature type="chain" id="PRO_0000314851" description="Keratin, type I cytoskeletal 24">
    <location>
        <begin position="1"/>
        <end position="512"/>
    </location>
</feature>
<feature type="domain" description="IF rod" evidence="1">
    <location>
        <begin position="141"/>
        <end position="455"/>
    </location>
</feature>
<feature type="region of interest" description="Head">
    <location>
        <begin position="1"/>
        <end position="140"/>
    </location>
</feature>
<feature type="region of interest" description="Disordered" evidence="2">
    <location>
        <begin position="1"/>
        <end position="21"/>
    </location>
</feature>
<feature type="region of interest" description="Coil 1A">
    <location>
        <begin position="141"/>
        <end position="176"/>
    </location>
</feature>
<feature type="region of interest" description="Linker 1">
    <location>
        <begin position="177"/>
        <end position="197"/>
    </location>
</feature>
<feature type="region of interest" description="Coil 1B">
    <location>
        <begin position="198"/>
        <end position="289"/>
    </location>
</feature>
<feature type="region of interest" description="Linker 12">
    <location>
        <begin position="290"/>
        <end position="312"/>
    </location>
</feature>
<feature type="region of interest" description="Coil 2">
    <location>
        <begin position="313"/>
        <end position="451"/>
    </location>
</feature>
<feature type="region of interest" description="Tail">
    <location>
        <begin position="452"/>
        <end position="512"/>
    </location>
</feature>
<feature type="compositionally biased region" description="Low complexity" evidence="2">
    <location>
        <begin position="8"/>
        <end position="21"/>
    </location>
</feature>
<feature type="sequence conflict" description="In Ref. 2; AAI29849." evidence="3" ref="2">
    <original>S</original>
    <variation>N</variation>
    <location>
        <position position="70"/>
    </location>
</feature>
<feature type="sequence conflict" description="In Ref. 2; AAI29849." evidence="3" ref="2">
    <original>Y</original>
    <variation>F</variation>
    <location>
        <position position="83"/>
    </location>
</feature>
<gene>
    <name type="primary">Krt24</name>
    <name type="synonym">Ka24</name>
</gene>
<comment type="subunit">
    <text>Heterotetramer of two type I and two type II keratins.</text>
</comment>
<comment type="miscellaneous">
    <text>There are two types of cytoskeletal and microfibrillar keratin, I (acidic) and II (neutral to basic) (40-55 and 56-70 kDa, respectively).</text>
</comment>
<comment type="similarity">
    <text evidence="1">Belongs to the intermediate filament family.</text>
</comment>
<evidence type="ECO:0000255" key="1">
    <source>
        <dbReference type="PROSITE-ProRule" id="PRU01188"/>
    </source>
</evidence>
<evidence type="ECO:0000256" key="2">
    <source>
        <dbReference type="SAM" id="MobiDB-lite"/>
    </source>
</evidence>
<evidence type="ECO:0000305" key="3"/>
<reference key="1">
    <citation type="journal article" date="2009" name="PLoS Biol.">
        <title>Lineage-specific biology revealed by a finished genome assembly of the mouse.</title>
        <authorList>
            <person name="Church D.M."/>
            <person name="Goodstadt L."/>
            <person name="Hillier L.W."/>
            <person name="Zody M.C."/>
            <person name="Goldstein S."/>
            <person name="She X."/>
            <person name="Bult C.J."/>
            <person name="Agarwala R."/>
            <person name="Cherry J.L."/>
            <person name="DiCuccio M."/>
            <person name="Hlavina W."/>
            <person name="Kapustin Y."/>
            <person name="Meric P."/>
            <person name="Maglott D."/>
            <person name="Birtle Z."/>
            <person name="Marques A.C."/>
            <person name="Graves T."/>
            <person name="Zhou S."/>
            <person name="Teague B."/>
            <person name="Potamousis K."/>
            <person name="Churas C."/>
            <person name="Place M."/>
            <person name="Herschleb J."/>
            <person name="Runnheim R."/>
            <person name="Forrest D."/>
            <person name="Amos-Landgraf J."/>
            <person name="Schwartz D.C."/>
            <person name="Cheng Z."/>
            <person name="Lindblad-Toh K."/>
            <person name="Eichler E.E."/>
            <person name="Ponting C.P."/>
        </authorList>
    </citation>
    <scope>NUCLEOTIDE SEQUENCE [LARGE SCALE GENOMIC DNA]</scope>
    <source>
        <strain>C57BL/6J</strain>
    </source>
</reference>
<reference key="2">
    <citation type="journal article" date="2004" name="Genome Res.">
        <title>The status, quality, and expansion of the NIH full-length cDNA project: the Mammalian Gene Collection (MGC).</title>
        <authorList>
            <consortium name="The MGC Project Team"/>
        </authorList>
    </citation>
    <scope>NUCLEOTIDE SEQUENCE [LARGE SCALE MRNA]</scope>
</reference>
<reference key="3">
    <citation type="journal article" date="2005" name="Science">
        <title>The transcriptional landscape of the mammalian genome.</title>
        <authorList>
            <person name="Carninci P."/>
            <person name="Kasukawa T."/>
            <person name="Katayama S."/>
            <person name="Gough J."/>
            <person name="Frith M.C."/>
            <person name="Maeda N."/>
            <person name="Oyama R."/>
            <person name="Ravasi T."/>
            <person name="Lenhard B."/>
            <person name="Wells C."/>
            <person name="Kodzius R."/>
            <person name="Shimokawa K."/>
            <person name="Bajic V.B."/>
            <person name="Brenner S.E."/>
            <person name="Batalov S."/>
            <person name="Forrest A.R."/>
            <person name="Zavolan M."/>
            <person name="Davis M.J."/>
            <person name="Wilming L.G."/>
            <person name="Aidinis V."/>
            <person name="Allen J.E."/>
            <person name="Ambesi-Impiombato A."/>
            <person name="Apweiler R."/>
            <person name="Aturaliya R.N."/>
            <person name="Bailey T.L."/>
            <person name="Bansal M."/>
            <person name="Baxter L."/>
            <person name="Beisel K.W."/>
            <person name="Bersano T."/>
            <person name="Bono H."/>
            <person name="Chalk A.M."/>
            <person name="Chiu K.P."/>
            <person name="Choudhary V."/>
            <person name="Christoffels A."/>
            <person name="Clutterbuck D.R."/>
            <person name="Crowe M.L."/>
            <person name="Dalla E."/>
            <person name="Dalrymple B.P."/>
            <person name="de Bono B."/>
            <person name="Della Gatta G."/>
            <person name="di Bernardo D."/>
            <person name="Down T."/>
            <person name="Engstrom P."/>
            <person name="Fagiolini M."/>
            <person name="Faulkner G."/>
            <person name="Fletcher C.F."/>
            <person name="Fukushima T."/>
            <person name="Furuno M."/>
            <person name="Futaki S."/>
            <person name="Gariboldi M."/>
            <person name="Georgii-Hemming P."/>
            <person name="Gingeras T.R."/>
            <person name="Gojobori T."/>
            <person name="Green R.E."/>
            <person name="Gustincich S."/>
            <person name="Harbers M."/>
            <person name="Hayashi Y."/>
            <person name="Hensch T.K."/>
            <person name="Hirokawa N."/>
            <person name="Hill D."/>
            <person name="Huminiecki L."/>
            <person name="Iacono M."/>
            <person name="Ikeo K."/>
            <person name="Iwama A."/>
            <person name="Ishikawa T."/>
            <person name="Jakt M."/>
            <person name="Kanapin A."/>
            <person name="Katoh M."/>
            <person name="Kawasawa Y."/>
            <person name="Kelso J."/>
            <person name="Kitamura H."/>
            <person name="Kitano H."/>
            <person name="Kollias G."/>
            <person name="Krishnan S.P."/>
            <person name="Kruger A."/>
            <person name="Kummerfeld S.K."/>
            <person name="Kurochkin I.V."/>
            <person name="Lareau L.F."/>
            <person name="Lazarevic D."/>
            <person name="Lipovich L."/>
            <person name="Liu J."/>
            <person name="Liuni S."/>
            <person name="McWilliam S."/>
            <person name="Madan Babu M."/>
            <person name="Madera M."/>
            <person name="Marchionni L."/>
            <person name="Matsuda H."/>
            <person name="Matsuzawa S."/>
            <person name="Miki H."/>
            <person name="Mignone F."/>
            <person name="Miyake S."/>
            <person name="Morris K."/>
            <person name="Mottagui-Tabar S."/>
            <person name="Mulder N."/>
            <person name="Nakano N."/>
            <person name="Nakauchi H."/>
            <person name="Ng P."/>
            <person name="Nilsson R."/>
            <person name="Nishiguchi S."/>
            <person name="Nishikawa S."/>
            <person name="Nori F."/>
            <person name="Ohara O."/>
            <person name="Okazaki Y."/>
            <person name="Orlando V."/>
            <person name="Pang K.C."/>
            <person name="Pavan W.J."/>
            <person name="Pavesi G."/>
            <person name="Pesole G."/>
            <person name="Petrovsky N."/>
            <person name="Piazza S."/>
            <person name="Reed J."/>
            <person name="Reid J.F."/>
            <person name="Ring B.Z."/>
            <person name="Ringwald M."/>
            <person name="Rost B."/>
            <person name="Ruan Y."/>
            <person name="Salzberg S.L."/>
            <person name="Sandelin A."/>
            <person name="Schneider C."/>
            <person name="Schoenbach C."/>
            <person name="Sekiguchi K."/>
            <person name="Semple C.A."/>
            <person name="Seno S."/>
            <person name="Sessa L."/>
            <person name="Sheng Y."/>
            <person name="Shibata Y."/>
            <person name="Shimada H."/>
            <person name="Shimada K."/>
            <person name="Silva D."/>
            <person name="Sinclair B."/>
            <person name="Sperling S."/>
            <person name="Stupka E."/>
            <person name="Sugiura K."/>
            <person name="Sultana R."/>
            <person name="Takenaka Y."/>
            <person name="Taki K."/>
            <person name="Tammoja K."/>
            <person name="Tan S.L."/>
            <person name="Tang S."/>
            <person name="Taylor M.S."/>
            <person name="Tegner J."/>
            <person name="Teichmann S.A."/>
            <person name="Ueda H.R."/>
            <person name="van Nimwegen E."/>
            <person name="Verardo R."/>
            <person name="Wei C.L."/>
            <person name="Yagi K."/>
            <person name="Yamanishi H."/>
            <person name="Zabarovsky E."/>
            <person name="Zhu S."/>
            <person name="Zimmer A."/>
            <person name="Hide W."/>
            <person name="Bult C."/>
            <person name="Grimmond S.M."/>
            <person name="Teasdale R.D."/>
            <person name="Liu E.T."/>
            <person name="Brusic V."/>
            <person name="Quackenbush J."/>
            <person name="Wahlestedt C."/>
            <person name="Mattick J.S."/>
            <person name="Hume D.A."/>
            <person name="Kai C."/>
            <person name="Sasaki D."/>
            <person name="Tomaru Y."/>
            <person name="Fukuda S."/>
            <person name="Kanamori-Katayama M."/>
            <person name="Suzuki M."/>
            <person name="Aoki J."/>
            <person name="Arakawa T."/>
            <person name="Iida J."/>
            <person name="Imamura K."/>
            <person name="Itoh M."/>
            <person name="Kato T."/>
            <person name="Kawaji H."/>
            <person name="Kawagashira N."/>
            <person name="Kawashima T."/>
            <person name="Kojima M."/>
            <person name="Kondo S."/>
            <person name="Konno H."/>
            <person name="Nakano K."/>
            <person name="Ninomiya N."/>
            <person name="Nishio T."/>
            <person name="Okada M."/>
            <person name="Plessy C."/>
            <person name="Shibata K."/>
            <person name="Shiraki T."/>
            <person name="Suzuki S."/>
            <person name="Tagami M."/>
            <person name="Waki K."/>
            <person name="Watahiki A."/>
            <person name="Okamura-Oho Y."/>
            <person name="Suzuki H."/>
            <person name="Kawai J."/>
            <person name="Hayashizaki Y."/>
        </authorList>
    </citation>
    <scope>NUCLEOTIDE SEQUENCE [LARGE SCALE MRNA] OF 76-512</scope>
    <source>
        <strain>C57BL/6J</strain>
        <tissue>Eye</tissue>
    </source>
</reference>
<dbReference type="EMBL" id="AL590991">
    <property type="status" value="NOT_ANNOTATED_CDS"/>
    <property type="molecule type" value="Genomic_DNA"/>
</dbReference>
<dbReference type="EMBL" id="BC129847">
    <property type="protein sequence ID" value="AAI29848.1"/>
    <property type="molecule type" value="mRNA"/>
</dbReference>
<dbReference type="EMBL" id="BC129848">
    <property type="protein sequence ID" value="AAI29849.1"/>
    <property type="molecule type" value="mRNA"/>
</dbReference>
<dbReference type="EMBL" id="AK053678">
    <property type="protein sequence ID" value="BAC35470.1"/>
    <property type="molecule type" value="mRNA"/>
</dbReference>
<dbReference type="CCDS" id="CCDS36305.1"/>
<dbReference type="RefSeq" id="NP_083669.1">
    <property type="nucleotide sequence ID" value="NM_029393.2"/>
</dbReference>
<dbReference type="SMR" id="A1L317"/>
<dbReference type="BioGRID" id="217685">
    <property type="interactions" value="3"/>
</dbReference>
<dbReference type="FunCoup" id="A1L317">
    <property type="interactions" value="131"/>
</dbReference>
<dbReference type="STRING" id="10090.ENSMUSP00000017255"/>
<dbReference type="iPTMnet" id="A1L317"/>
<dbReference type="PhosphoSitePlus" id="A1L317"/>
<dbReference type="jPOST" id="A1L317"/>
<dbReference type="PaxDb" id="10090-ENSMUSP00000017255"/>
<dbReference type="PeptideAtlas" id="A1L317"/>
<dbReference type="ProteomicsDB" id="269163"/>
<dbReference type="Antibodypedia" id="16540">
    <property type="antibodies" value="220 antibodies from 14 providers"/>
</dbReference>
<dbReference type="DNASU" id="75706"/>
<dbReference type="Ensembl" id="ENSMUST00000017255.4">
    <property type="protein sequence ID" value="ENSMUSP00000017255.4"/>
    <property type="gene ID" value="ENSMUSG00000020913.4"/>
</dbReference>
<dbReference type="GeneID" id="75706"/>
<dbReference type="KEGG" id="mmu:75706"/>
<dbReference type="UCSC" id="uc007lim.1">
    <property type="organism name" value="mouse"/>
</dbReference>
<dbReference type="AGR" id="MGI:1922956"/>
<dbReference type="CTD" id="192666"/>
<dbReference type="MGI" id="MGI:1922956">
    <property type="gene designation" value="Krt24"/>
</dbReference>
<dbReference type="VEuPathDB" id="HostDB:ENSMUSG00000020913"/>
<dbReference type="eggNOG" id="ENOG502QTM6">
    <property type="taxonomic scope" value="Eukaryota"/>
</dbReference>
<dbReference type="GeneTree" id="ENSGT00940000161783"/>
<dbReference type="HOGENOM" id="CLU_012560_8_3_1"/>
<dbReference type="InParanoid" id="A1L317"/>
<dbReference type="OMA" id="SGSTNMG"/>
<dbReference type="OrthoDB" id="2441647at2759"/>
<dbReference type="PhylomeDB" id="A1L317"/>
<dbReference type="TreeFam" id="TF332742"/>
<dbReference type="Reactome" id="R-MMU-6805567">
    <property type="pathway name" value="Keratinization"/>
</dbReference>
<dbReference type="Reactome" id="R-MMU-6809371">
    <property type="pathway name" value="Formation of the cornified envelope"/>
</dbReference>
<dbReference type="BioGRID-ORCS" id="75706">
    <property type="hits" value="3 hits in 75 CRISPR screens"/>
</dbReference>
<dbReference type="ChiTaRS" id="Krt24">
    <property type="organism name" value="mouse"/>
</dbReference>
<dbReference type="PRO" id="PR:A1L317"/>
<dbReference type="Proteomes" id="UP000000589">
    <property type="component" value="Chromosome 11"/>
</dbReference>
<dbReference type="RNAct" id="A1L317">
    <property type="molecule type" value="protein"/>
</dbReference>
<dbReference type="Bgee" id="ENSMUSG00000020913">
    <property type="expression patterns" value="Expressed in tail skin and 38 other cell types or tissues"/>
</dbReference>
<dbReference type="GO" id="GO:0005882">
    <property type="term" value="C:intermediate filament"/>
    <property type="evidence" value="ECO:0007669"/>
    <property type="project" value="UniProtKB-KW"/>
</dbReference>
<dbReference type="GO" id="GO:0005198">
    <property type="term" value="F:structural molecule activity"/>
    <property type="evidence" value="ECO:0007669"/>
    <property type="project" value="InterPro"/>
</dbReference>
<dbReference type="FunFam" id="1.20.5.1160:FF:000002">
    <property type="entry name" value="Type I keratin 10"/>
    <property type="match status" value="1"/>
</dbReference>
<dbReference type="FunFam" id="1.20.5.170:FF:000002">
    <property type="entry name" value="Type I keratin KA11"/>
    <property type="match status" value="1"/>
</dbReference>
<dbReference type="FunFam" id="1.20.5.500:FF:000001">
    <property type="entry name" value="Type II keratin 23"/>
    <property type="match status" value="1"/>
</dbReference>
<dbReference type="Gene3D" id="1.20.5.170">
    <property type="match status" value="1"/>
</dbReference>
<dbReference type="Gene3D" id="1.20.5.500">
    <property type="entry name" value="Single helix bin"/>
    <property type="match status" value="1"/>
</dbReference>
<dbReference type="Gene3D" id="1.20.5.1160">
    <property type="entry name" value="Vasodilator-stimulated phosphoprotein"/>
    <property type="match status" value="1"/>
</dbReference>
<dbReference type="InterPro" id="IPR039008">
    <property type="entry name" value="IF_rod_dom"/>
</dbReference>
<dbReference type="InterPro" id="IPR002957">
    <property type="entry name" value="Keratin_I"/>
</dbReference>
<dbReference type="PANTHER" id="PTHR23239">
    <property type="entry name" value="INTERMEDIATE FILAMENT"/>
    <property type="match status" value="1"/>
</dbReference>
<dbReference type="PANTHER" id="PTHR23239:SF207">
    <property type="entry name" value="KERATIN, TYPE I CYTOSKELETAL 24"/>
    <property type="match status" value="1"/>
</dbReference>
<dbReference type="Pfam" id="PF00038">
    <property type="entry name" value="Filament"/>
    <property type="match status" value="1"/>
</dbReference>
<dbReference type="PRINTS" id="PR01248">
    <property type="entry name" value="TYPE1KERATIN"/>
</dbReference>
<dbReference type="SMART" id="SM01391">
    <property type="entry name" value="Filament"/>
    <property type="match status" value="1"/>
</dbReference>
<dbReference type="SUPFAM" id="SSF64593">
    <property type="entry name" value="Intermediate filament protein, coiled coil region"/>
    <property type="match status" value="2"/>
</dbReference>
<dbReference type="PROSITE" id="PS51842">
    <property type="entry name" value="IF_ROD_2"/>
    <property type="match status" value="1"/>
</dbReference>
<protein>
    <recommendedName>
        <fullName>Keratin, type I cytoskeletal 24</fullName>
    </recommendedName>
    <alternativeName>
        <fullName>Cytokeratin-24</fullName>
        <shortName>CK-24</shortName>
    </alternativeName>
    <alternativeName>
        <fullName>Keratin-24</fullName>
        <shortName>K24</shortName>
    </alternativeName>
    <alternativeName>
        <fullName>Type I keratin-24</fullName>
    </alternativeName>
</protein>
<accession>A1L317</accession>
<accession>A1L316</accession>
<accession>Q8BKC6</accession>
<organism>
    <name type="scientific">Mus musculus</name>
    <name type="common">Mouse</name>
    <dbReference type="NCBI Taxonomy" id="10090"/>
    <lineage>
        <taxon>Eukaryota</taxon>
        <taxon>Metazoa</taxon>
        <taxon>Chordata</taxon>
        <taxon>Craniata</taxon>
        <taxon>Vertebrata</taxon>
        <taxon>Euteleostomi</taxon>
        <taxon>Mammalia</taxon>
        <taxon>Eutheria</taxon>
        <taxon>Euarchontoglires</taxon>
        <taxon>Glires</taxon>
        <taxon>Rodentia</taxon>
        <taxon>Myomorpha</taxon>
        <taxon>Muroidea</taxon>
        <taxon>Muridae</taxon>
        <taxon>Murinae</taxon>
        <taxon>Mus</taxon>
        <taxon>Mus</taxon>
    </lineage>
</organism>